<proteinExistence type="inferred from homology"/>
<feature type="chain" id="PRO_1000135463" description="tRNA uridine(34) hydroxylase">
    <location>
        <begin position="1"/>
        <end position="305"/>
    </location>
</feature>
<feature type="domain" description="Rhodanese" evidence="1">
    <location>
        <begin position="125"/>
        <end position="219"/>
    </location>
</feature>
<feature type="active site" description="Cysteine persulfide intermediate" evidence="1">
    <location>
        <position position="179"/>
    </location>
</feature>
<organism>
    <name type="scientific">Brucella melitensis biotype 2 (strain ATCC 23457)</name>
    <dbReference type="NCBI Taxonomy" id="546272"/>
    <lineage>
        <taxon>Bacteria</taxon>
        <taxon>Pseudomonadati</taxon>
        <taxon>Pseudomonadota</taxon>
        <taxon>Alphaproteobacteria</taxon>
        <taxon>Hyphomicrobiales</taxon>
        <taxon>Brucellaceae</taxon>
        <taxon>Brucella/Ochrobactrum group</taxon>
        <taxon>Brucella</taxon>
    </lineage>
</organism>
<comment type="function">
    <text evidence="1">Catalyzes oxygen-dependent 5-hydroxyuridine (ho5U) modification at position 34 in tRNAs.</text>
</comment>
<comment type="catalytic activity">
    <reaction evidence="1">
        <text>uridine(34) in tRNA + AH2 + O2 = 5-hydroxyuridine(34) in tRNA + A + H2O</text>
        <dbReference type="Rhea" id="RHEA:64224"/>
        <dbReference type="Rhea" id="RHEA-COMP:11727"/>
        <dbReference type="Rhea" id="RHEA-COMP:13381"/>
        <dbReference type="ChEBI" id="CHEBI:13193"/>
        <dbReference type="ChEBI" id="CHEBI:15377"/>
        <dbReference type="ChEBI" id="CHEBI:15379"/>
        <dbReference type="ChEBI" id="CHEBI:17499"/>
        <dbReference type="ChEBI" id="CHEBI:65315"/>
        <dbReference type="ChEBI" id="CHEBI:136877"/>
    </reaction>
</comment>
<comment type="similarity">
    <text evidence="1">Belongs to the TrhO family.</text>
</comment>
<accession>C0RK37</accession>
<dbReference type="EC" id="1.14.-.-" evidence="1"/>
<dbReference type="EMBL" id="CP001489">
    <property type="protein sequence ID" value="ACO01970.1"/>
    <property type="molecule type" value="Genomic_DNA"/>
</dbReference>
<dbReference type="RefSeq" id="WP_002966492.1">
    <property type="nucleotide sequence ID" value="NC_012442.1"/>
</dbReference>
<dbReference type="SMR" id="C0RK37"/>
<dbReference type="KEGG" id="bmi:BMEA_B0090"/>
<dbReference type="HOGENOM" id="CLU_038878_0_0_5"/>
<dbReference type="Proteomes" id="UP000001748">
    <property type="component" value="Chromosome II"/>
</dbReference>
<dbReference type="GO" id="GO:0016705">
    <property type="term" value="F:oxidoreductase activity, acting on paired donors, with incorporation or reduction of molecular oxygen"/>
    <property type="evidence" value="ECO:0007669"/>
    <property type="project" value="UniProtKB-UniRule"/>
</dbReference>
<dbReference type="GO" id="GO:0006400">
    <property type="term" value="P:tRNA modification"/>
    <property type="evidence" value="ECO:0007669"/>
    <property type="project" value="UniProtKB-UniRule"/>
</dbReference>
<dbReference type="CDD" id="cd01518">
    <property type="entry name" value="RHOD_YceA"/>
    <property type="match status" value="1"/>
</dbReference>
<dbReference type="Gene3D" id="3.30.70.100">
    <property type="match status" value="1"/>
</dbReference>
<dbReference type="Gene3D" id="3.40.250.10">
    <property type="entry name" value="Rhodanese-like domain"/>
    <property type="match status" value="1"/>
</dbReference>
<dbReference type="HAMAP" id="MF_00469">
    <property type="entry name" value="TrhO"/>
    <property type="match status" value="1"/>
</dbReference>
<dbReference type="InterPro" id="IPR001763">
    <property type="entry name" value="Rhodanese-like_dom"/>
</dbReference>
<dbReference type="InterPro" id="IPR036873">
    <property type="entry name" value="Rhodanese-like_dom_sf"/>
</dbReference>
<dbReference type="InterPro" id="IPR020936">
    <property type="entry name" value="TrhO"/>
</dbReference>
<dbReference type="InterPro" id="IPR040503">
    <property type="entry name" value="TRHO_N"/>
</dbReference>
<dbReference type="NCBIfam" id="NF001136">
    <property type="entry name" value="PRK00142.1-4"/>
    <property type="match status" value="1"/>
</dbReference>
<dbReference type="PANTHER" id="PTHR43268:SF3">
    <property type="entry name" value="RHODANESE-LIKE DOMAIN-CONTAINING PROTEIN 7-RELATED"/>
    <property type="match status" value="1"/>
</dbReference>
<dbReference type="PANTHER" id="PTHR43268">
    <property type="entry name" value="THIOSULFATE SULFURTRANSFERASE/RHODANESE-LIKE DOMAIN-CONTAINING PROTEIN 2"/>
    <property type="match status" value="1"/>
</dbReference>
<dbReference type="Pfam" id="PF00581">
    <property type="entry name" value="Rhodanese"/>
    <property type="match status" value="1"/>
</dbReference>
<dbReference type="Pfam" id="PF17773">
    <property type="entry name" value="UPF0176_N"/>
    <property type="match status" value="1"/>
</dbReference>
<dbReference type="SMART" id="SM00450">
    <property type="entry name" value="RHOD"/>
    <property type="match status" value="1"/>
</dbReference>
<dbReference type="SUPFAM" id="SSF52821">
    <property type="entry name" value="Rhodanese/Cell cycle control phosphatase"/>
    <property type="match status" value="1"/>
</dbReference>
<dbReference type="PROSITE" id="PS50206">
    <property type="entry name" value="RHODANESE_3"/>
    <property type="match status" value="1"/>
</dbReference>
<evidence type="ECO:0000255" key="1">
    <source>
        <dbReference type="HAMAP-Rule" id="MF_00469"/>
    </source>
</evidence>
<gene>
    <name evidence="1" type="primary">trhO</name>
    <name type="ordered locus">BMEA_B0090</name>
</gene>
<keyword id="KW-0560">Oxidoreductase</keyword>
<keyword id="KW-0819">tRNA processing</keyword>
<name>TRHO_BRUMB</name>
<reference key="1">
    <citation type="submission" date="2009-03" db="EMBL/GenBank/DDBJ databases">
        <title>Brucella melitensis ATCC 23457 whole genome shotgun sequencing project.</title>
        <authorList>
            <person name="Setubal J.C."/>
            <person name="Boyle S."/>
            <person name="Crasta O.R."/>
            <person name="Gillespie J.J."/>
            <person name="Kenyon R.W."/>
            <person name="Lu J."/>
            <person name="Mane S."/>
            <person name="Nagrani S."/>
            <person name="Shallom J.M."/>
            <person name="Shallom S."/>
            <person name="Shukla M."/>
            <person name="Snyder E.E."/>
            <person name="Sobral B.W."/>
            <person name="Wattam A.R."/>
            <person name="Will R."/>
            <person name="Williams K."/>
            <person name="Yoo H."/>
            <person name="Munk C."/>
            <person name="Tapia R."/>
            <person name="Han C."/>
            <person name="Detter J.C."/>
            <person name="Bruce D."/>
            <person name="Brettin T.S."/>
        </authorList>
    </citation>
    <scope>NUCLEOTIDE SEQUENCE [LARGE SCALE GENOMIC DNA]</scope>
    <source>
        <strain>ATCC 23457</strain>
    </source>
</reference>
<sequence length="305" mass="33897">MSNLPFTVAALYCFAPLPQYESLREPLAQLCCANGIKGTLLLAAEGINGTVAGSAGAIEKLIAHITAIPGLGEPELKYSHASEMPFHRMKVRLKREIVTMGVEGIDPLKSVGTYIAPKDWNALIADENTVVVDKRNDYEYAIGTFEGAIDPQTRTFREFPEWVKQNRDRLEGKKIAMFCTGGIRCEKATAFVKGLGFDDVYHLKGGILKYLEEVPREQSMWNGECFVFDERVAVGHGLAESDVELCRACRRPLTPQDKLSQFFEEGVSCAGCYAERTPEDRARYAERQKQVKLAEKRGANKHIGS</sequence>
<protein>
    <recommendedName>
        <fullName evidence="1">tRNA uridine(34) hydroxylase</fullName>
        <ecNumber evidence="1">1.14.-.-</ecNumber>
    </recommendedName>
    <alternativeName>
        <fullName evidence="1">tRNA hydroxylation protein O</fullName>
    </alternativeName>
</protein>